<sequence>MTIPTSFEMLKGMHIKDAFLLIAMLYLGYLLCICFYNIYLHPLRHIPGSKLAVMGPYLEFYHEVIRQGQYLWEIEKMHDKYGPIVRVNEREIHIRDSSYYHTIYAAGSRKTNKDAATVGAFDVPNSTAATVDHDQHRARRGYLNPYFSKRSLANLEPTIHERISKLLNRLEQHQNNDDIITLDGIFSALTADVICSRFYGKHFDYLSIPDYHFVVRDGFQGLTKLYHLGRFLPTLVTILKCLPQQIIRLILPNLADLIVMRDEIQANGIAQFTSSQTADSKASALVGALGDKNIPPHERTVARLLDEGTVFLFAGTETTSRTLAVTMFYLLTNPDCLKKLRAELDTLPSTEDYQHSLSTLESLPYLSGVVHEGLRLAFGPITRSARVPMNVDLQYKEYTIPAGTPLSMSTYFVHTDKELYPEPEKFKPERWIQAAEENIPLKKFLTNFSQGSRQCIGISMSFAEMYLTISRVARAYNFELYETTAADLDMTYARIVPYPKEIPGKTEGLGEIRVKIVGKNHSQIEE</sequence>
<comment type="function">
    <text evidence="7">Cytochrome P450 monooxygenase; part of the satratoxin SC2 cluster involved in the biosynthesis of satratoxins, trichothecene mycotoxins that are associated with human food poisonings (PubMed:25015739). Satratoxins are suggested to be made by products of multiple gene clusters (SC1, SC2 and SC3) that encode 21 proteins in all, including polyketide synthases, acetyltransferases, and other enzymes expected to modify the trichothecene skeleton (PubMed:25015739). SC1 encodes 10 proteins, SAT1 to SAT10 (PubMed:25015739). The largest are SAT8, which encodes a putative polyketide synthase (PKS) with a conventional non-reducing architecture, and SAT10, a putative protein containing four ankyrin repeats and thus may be involved in protein scaffolding (PubMed:25015739). The putative short-chain reductase SAT3 may assist the PKS in some capacity (PubMed:25015739). SAT6 contains a secretory lipase domain and acts probably as a trichothecene esterase (PubMed:25015739). SAT5 encodes a putative acetyltransferase, and so, with SAT6, may affect endogenous protection from toxicity (PubMed:25015739). The probable transcription factor SAT9 may regulate the expression of the SC1 cluster (PubMed:25015739). SC2 encodes proteins SAT11 to SAT16, the largest of which encodes the putative reducing PKS SAT13 (PubMed:25015739). SAT11 is a cytochrome P450 monooxygenase, while SAT14 and SAT16 are probable acetyltransferases (PubMed:25015739). The SC2 cluster may be regulated by the transcription factor SAT15 (PubMed:25015739). SC3 is a small cluster that encodes 5 proteins, SAT17 to SAT21 (PubMed:25015739). SAT21 is a putative MFS-type transporter which may have a role in exporting secondary metabolites (PubMed:25015739). The four other proteins putatively encoded in SC3 include the taurine hydroxylase-like protein SAT17, the O-methyltransferase SAT18, the acetyltransferase SAT19, and the Cys6-type zinc finger SAT20, the latter being probably involved in regulation of SC3 expression (PubMed:25015739).</text>
</comment>
<comment type="cofactor">
    <cofactor evidence="1">
        <name>heme</name>
        <dbReference type="ChEBI" id="CHEBI:30413"/>
    </cofactor>
</comment>
<comment type="pathway">
    <text evidence="4">Mycotoxin biosynthesis.</text>
</comment>
<comment type="subcellular location">
    <subcellularLocation>
        <location evidence="2">Membrane</location>
        <topology evidence="2">Single-pass membrane protein</topology>
    </subcellularLocation>
</comment>
<comment type="miscellaneous">
    <text evidence="6">Trichothecenes are sesquiterpenoid toxins that act by inhibiting protein biosynthesis.</text>
</comment>
<comment type="similarity">
    <text evidence="6">Belongs to the cytochrome P450 family.</text>
</comment>
<dbReference type="EC" id="1.-.-.-" evidence="7"/>
<dbReference type="EMBL" id="KL648628">
    <property type="protein sequence ID" value="KEY67210.1"/>
    <property type="molecule type" value="Genomic_DNA"/>
</dbReference>
<dbReference type="SMR" id="A0A084API1"/>
<dbReference type="GlyCosmos" id="A0A084API1">
    <property type="glycosylation" value="3 sites, No reported glycans"/>
</dbReference>
<dbReference type="HOGENOM" id="CLU_001570_14_4_1"/>
<dbReference type="OrthoDB" id="295720at5125"/>
<dbReference type="Proteomes" id="UP000028045">
    <property type="component" value="Unassembled WGS sequence"/>
</dbReference>
<dbReference type="GO" id="GO:0016020">
    <property type="term" value="C:membrane"/>
    <property type="evidence" value="ECO:0007669"/>
    <property type="project" value="UniProtKB-SubCell"/>
</dbReference>
<dbReference type="GO" id="GO:0020037">
    <property type="term" value="F:heme binding"/>
    <property type="evidence" value="ECO:0007669"/>
    <property type="project" value="InterPro"/>
</dbReference>
<dbReference type="GO" id="GO:0005506">
    <property type="term" value="F:iron ion binding"/>
    <property type="evidence" value="ECO:0007669"/>
    <property type="project" value="InterPro"/>
</dbReference>
<dbReference type="GO" id="GO:0004497">
    <property type="term" value="F:monooxygenase activity"/>
    <property type="evidence" value="ECO:0007669"/>
    <property type="project" value="UniProtKB-KW"/>
</dbReference>
<dbReference type="GO" id="GO:0016705">
    <property type="term" value="F:oxidoreductase activity, acting on paired donors, with incorporation or reduction of molecular oxygen"/>
    <property type="evidence" value="ECO:0007669"/>
    <property type="project" value="InterPro"/>
</dbReference>
<dbReference type="CDD" id="cd11062">
    <property type="entry name" value="CYP58-like"/>
    <property type="match status" value="1"/>
</dbReference>
<dbReference type="Gene3D" id="1.10.630.10">
    <property type="entry name" value="Cytochrome P450"/>
    <property type="match status" value="1"/>
</dbReference>
<dbReference type="InterPro" id="IPR001128">
    <property type="entry name" value="Cyt_P450"/>
</dbReference>
<dbReference type="InterPro" id="IPR017972">
    <property type="entry name" value="Cyt_P450_CS"/>
</dbReference>
<dbReference type="InterPro" id="IPR002401">
    <property type="entry name" value="Cyt_P450_E_grp-I"/>
</dbReference>
<dbReference type="InterPro" id="IPR036396">
    <property type="entry name" value="Cyt_P450_sf"/>
</dbReference>
<dbReference type="InterPro" id="IPR050121">
    <property type="entry name" value="Cytochrome_P450_monoxygenase"/>
</dbReference>
<dbReference type="PANTHER" id="PTHR24305">
    <property type="entry name" value="CYTOCHROME P450"/>
    <property type="match status" value="1"/>
</dbReference>
<dbReference type="PANTHER" id="PTHR24305:SF157">
    <property type="entry name" value="N-ACETYLTRYPTOPHAN 6-HYDROXYLASE IVOC-RELATED"/>
    <property type="match status" value="1"/>
</dbReference>
<dbReference type="Pfam" id="PF00067">
    <property type="entry name" value="p450"/>
    <property type="match status" value="1"/>
</dbReference>
<dbReference type="PRINTS" id="PR00463">
    <property type="entry name" value="EP450I"/>
</dbReference>
<dbReference type="PRINTS" id="PR00385">
    <property type="entry name" value="P450"/>
</dbReference>
<dbReference type="SUPFAM" id="SSF48264">
    <property type="entry name" value="Cytochrome P450"/>
    <property type="match status" value="1"/>
</dbReference>
<dbReference type="PROSITE" id="PS00086">
    <property type="entry name" value="CYTOCHROME_P450"/>
    <property type="match status" value="1"/>
</dbReference>
<protein>
    <recommendedName>
        <fullName evidence="5">Cytochrome P450 monooxygenase SAT11</fullName>
        <ecNumber evidence="7">1.-.-.-</ecNumber>
    </recommendedName>
    <alternativeName>
        <fullName evidence="5">Satratoxin biosynthesis SC2 cluster protein 11</fullName>
    </alternativeName>
</protein>
<accession>A0A084API1</accession>
<gene>
    <name evidence="5" type="primary">SAT11</name>
    <name type="ORF">S7711_09749</name>
</gene>
<keyword id="KW-0325">Glycoprotein</keyword>
<keyword id="KW-0349">Heme</keyword>
<keyword id="KW-0408">Iron</keyword>
<keyword id="KW-0472">Membrane</keyword>
<keyword id="KW-0479">Metal-binding</keyword>
<keyword id="KW-0503">Monooxygenase</keyword>
<keyword id="KW-0560">Oxidoreductase</keyword>
<keyword id="KW-0812">Transmembrane</keyword>
<keyword id="KW-1133">Transmembrane helix</keyword>
<proteinExistence type="inferred from homology"/>
<name>SAT11_STACB</name>
<reference key="1">
    <citation type="journal article" date="2014" name="BMC Genomics">
        <title>Comparative genome sequencing reveals chemotype-specific gene clusters in the toxigenic black mold Stachybotrys.</title>
        <authorList>
            <person name="Semeiks J."/>
            <person name="Borek D."/>
            <person name="Otwinowski Z."/>
            <person name="Grishin N.V."/>
        </authorList>
    </citation>
    <scope>NUCLEOTIDE SEQUENCE [LARGE SCALE GENOMIC DNA]</scope>
    <scope>IDENTIFICATION</scope>
    <scope>FUNCTION</scope>
    <source>
        <strain>CBS 109288 / IBT 7711</strain>
    </source>
</reference>
<feature type="chain" id="PRO_0000442399" description="Cytochrome P450 monooxygenase SAT11">
    <location>
        <begin position="1"/>
        <end position="526"/>
    </location>
</feature>
<feature type="transmembrane region" description="Helical" evidence="2">
    <location>
        <begin position="18"/>
        <end position="38"/>
    </location>
</feature>
<feature type="binding site" description="axial binding residue" evidence="1">
    <location>
        <position position="455"/>
    </location>
    <ligand>
        <name>heme</name>
        <dbReference type="ChEBI" id="CHEBI:30413"/>
    </ligand>
    <ligandPart>
        <name>Fe</name>
        <dbReference type="ChEBI" id="CHEBI:18248"/>
    </ligandPart>
</feature>
<feature type="glycosylation site" description="N-linked (GlcNAc...) asparagine" evidence="3">
    <location>
        <position position="125"/>
    </location>
</feature>
<feature type="glycosylation site" description="N-linked (GlcNAc...) asparagine" evidence="3">
    <location>
        <position position="447"/>
    </location>
</feature>
<feature type="glycosylation site" description="N-linked (GlcNAc...) asparagine" evidence="3">
    <location>
        <position position="520"/>
    </location>
</feature>
<evidence type="ECO:0000250" key="1">
    <source>
        <dbReference type="UniProtKB" id="P04798"/>
    </source>
</evidence>
<evidence type="ECO:0000255" key="2"/>
<evidence type="ECO:0000255" key="3">
    <source>
        <dbReference type="PROSITE-ProRule" id="PRU00498"/>
    </source>
</evidence>
<evidence type="ECO:0000269" key="4">
    <source>
    </source>
</evidence>
<evidence type="ECO:0000303" key="5">
    <source>
    </source>
</evidence>
<evidence type="ECO:0000305" key="6"/>
<evidence type="ECO:0000305" key="7">
    <source>
    </source>
</evidence>
<organism>
    <name type="scientific">Stachybotrys chartarum (strain CBS 109288 / IBT 7711)</name>
    <name type="common">Toxic black mold</name>
    <name type="synonym">Stilbospora chartarum</name>
    <dbReference type="NCBI Taxonomy" id="1280523"/>
    <lineage>
        <taxon>Eukaryota</taxon>
        <taxon>Fungi</taxon>
        <taxon>Dikarya</taxon>
        <taxon>Ascomycota</taxon>
        <taxon>Pezizomycotina</taxon>
        <taxon>Sordariomycetes</taxon>
        <taxon>Hypocreomycetidae</taxon>
        <taxon>Hypocreales</taxon>
        <taxon>Stachybotryaceae</taxon>
        <taxon>Stachybotrys</taxon>
    </lineage>
</organism>